<protein>
    <recommendedName>
        <fullName evidence="1">Adenylate kinase</fullName>
        <shortName evidence="1">AK</shortName>
        <ecNumber evidence="1">2.7.4.3</ecNumber>
    </recommendedName>
    <alternativeName>
        <fullName evidence="1">ATP-AMP transphosphorylase</fullName>
    </alternativeName>
    <alternativeName>
        <fullName evidence="1">ATP:AMP phosphotransferase</fullName>
    </alternativeName>
    <alternativeName>
        <fullName evidence="1">Adenylate monophosphate kinase</fullName>
    </alternativeName>
</protein>
<keyword id="KW-0067">ATP-binding</keyword>
<keyword id="KW-0963">Cytoplasm</keyword>
<keyword id="KW-0418">Kinase</keyword>
<keyword id="KW-0479">Metal-binding</keyword>
<keyword id="KW-0545">Nucleotide biosynthesis</keyword>
<keyword id="KW-0547">Nucleotide-binding</keyword>
<keyword id="KW-1185">Reference proteome</keyword>
<keyword id="KW-0808">Transferase</keyword>
<keyword id="KW-0862">Zinc</keyword>
<name>KAD_LIMF3</name>
<reference key="1">
    <citation type="journal article" date="2008" name="DNA Res.">
        <title>Comparative genome analysis of Lactobacillus reuteri and Lactobacillus fermentum reveal a genomic island for reuterin and cobalamin production.</title>
        <authorList>
            <person name="Morita H."/>
            <person name="Toh H."/>
            <person name="Fukuda S."/>
            <person name="Horikawa H."/>
            <person name="Oshima K."/>
            <person name="Suzuki T."/>
            <person name="Murakami M."/>
            <person name="Hisamatsu S."/>
            <person name="Kato Y."/>
            <person name="Takizawa T."/>
            <person name="Fukuoka H."/>
            <person name="Yoshimura T."/>
            <person name="Itoh K."/>
            <person name="O'Sullivan D.J."/>
            <person name="McKay L.L."/>
            <person name="Ohno H."/>
            <person name="Kikuchi J."/>
            <person name="Masaoka T."/>
            <person name="Hattori M."/>
        </authorList>
    </citation>
    <scope>NUCLEOTIDE SEQUENCE [LARGE SCALE GENOMIC DNA]</scope>
    <source>
        <strain>NBRC 3956 / LMG 18251</strain>
    </source>
</reference>
<evidence type="ECO:0000255" key="1">
    <source>
        <dbReference type="HAMAP-Rule" id="MF_00235"/>
    </source>
</evidence>
<feature type="chain" id="PRO_1000100575" description="Adenylate kinase">
    <location>
        <begin position="1"/>
        <end position="216"/>
    </location>
</feature>
<feature type="region of interest" description="NMP" evidence="1">
    <location>
        <begin position="30"/>
        <end position="59"/>
    </location>
</feature>
<feature type="region of interest" description="LID" evidence="1">
    <location>
        <begin position="126"/>
        <end position="164"/>
    </location>
</feature>
<feature type="binding site" evidence="1">
    <location>
        <begin position="10"/>
        <end position="15"/>
    </location>
    <ligand>
        <name>ATP</name>
        <dbReference type="ChEBI" id="CHEBI:30616"/>
    </ligand>
</feature>
<feature type="binding site" evidence="1">
    <location>
        <position position="31"/>
    </location>
    <ligand>
        <name>AMP</name>
        <dbReference type="ChEBI" id="CHEBI:456215"/>
    </ligand>
</feature>
<feature type="binding site" evidence="1">
    <location>
        <position position="36"/>
    </location>
    <ligand>
        <name>AMP</name>
        <dbReference type="ChEBI" id="CHEBI:456215"/>
    </ligand>
</feature>
<feature type="binding site" evidence="1">
    <location>
        <begin position="57"/>
        <end position="59"/>
    </location>
    <ligand>
        <name>AMP</name>
        <dbReference type="ChEBI" id="CHEBI:456215"/>
    </ligand>
</feature>
<feature type="binding site" evidence="1">
    <location>
        <begin position="85"/>
        <end position="88"/>
    </location>
    <ligand>
        <name>AMP</name>
        <dbReference type="ChEBI" id="CHEBI:456215"/>
    </ligand>
</feature>
<feature type="binding site" evidence="1">
    <location>
        <position position="92"/>
    </location>
    <ligand>
        <name>AMP</name>
        <dbReference type="ChEBI" id="CHEBI:456215"/>
    </ligand>
</feature>
<feature type="binding site" evidence="1">
    <location>
        <position position="127"/>
    </location>
    <ligand>
        <name>ATP</name>
        <dbReference type="ChEBI" id="CHEBI:30616"/>
    </ligand>
</feature>
<feature type="binding site" evidence="1">
    <location>
        <position position="130"/>
    </location>
    <ligand>
        <name>Zn(2+)</name>
        <dbReference type="ChEBI" id="CHEBI:29105"/>
        <note>structural</note>
    </ligand>
</feature>
<feature type="binding site" evidence="1">
    <location>
        <position position="133"/>
    </location>
    <ligand>
        <name>Zn(2+)</name>
        <dbReference type="ChEBI" id="CHEBI:29105"/>
        <note>structural</note>
    </ligand>
</feature>
<feature type="binding site" evidence="1">
    <location>
        <begin position="136"/>
        <end position="137"/>
    </location>
    <ligand>
        <name>ATP</name>
        <dbReference type="ChEBI" id="CHEBI:30616"/>
    </ligand>
</feature>
<feature type="binding site" evidence="1">
    <location>
        <position position="150"/>
    </location>
    <ligand>
        <name>Zn(2+)</name>
        <dbReference type="ChEBI" id="CHEBI:29105"/>
        <note>structural</note>
    </ligand>
</feature>
<feature type="binding site" evidence="1">
    <location>
        <position position="153"/>
    </location>
    <ligand>
        <name>Zn(2+)</name>
        <dbReference type="ChEBI" id="CHEBI:29105"/>
        <note>structural</note>
    </ligand>
</feature>
<feature type="binding site" evidence="1">
    <location>
        <position position="161"/>
    </location>
    <ligand>
        <name>AMP</name>
        <dbReference type="ChEBI" id="CHEBI:456215"/>
    </ligand>
</feature>
<feature type="binding site" evidence="1">
    <location>
        <position position="172"/>
    </location>
    <ligand>
        <name>AMP</name>
        <dbReference type="ChEBI" id="CHEBI:456215"/>
    </ligand>
</feature>
<feature type="binding site" evidence="1">
    <location>
        <position position="200"/>
    </location>
    <ligand>
        <name>ATP</name>
        <dbReference type="ChEBI" id="CHEBI:30616"/>
    </ligand>
</feature>
<dbReference type="EC" id="2.7.4.3" evidence="1"/>
<dbReference type="EMBL" id="AP008937">
    <property type="protein sequence ID" value="BAG27830.1"/>
    <property type="molecule type" value="Genomic_DNA"/>
</dbReference>
<dbReference type="SMR" id="B2GDU8"/>
<dbReference type="KEGG" id="lfe:LAF_1494"/>
<dbReference type="eggNOG" id="COG0563">
    <property type="taxonomic scope" value="Bacteria"/>
</dbReference>
<dbReference type="HOGENOM" id="CLU_032354_1_2_9"/>
<dbReference type="UniPathway" id="UPA00588">
    <property type="reaction ID" value="UER00649"/>
</dbReference>
<dbReference type="Proteomes" id="UP000001697">
    <property type="component" value="Chromosome"/>
</dbReference>
<dbReference type="GO" id="GO:0005737">
    <property type="term" value="C:cytoplasm"/>
    <property type="evidence" value="ECO:0007669"/>
    <property type="project" value="UniProtKB-SubCell"/>
</dbReference>
<dbReference type="GO" id="GO:0004017">
    <property type="term" value="F:adenylate kinase activity"/>
    <property type="evidence" value="ECO:0007669"/>
    <property type="project" value="UniProtKB-UniRule"/>
</dbReference>
<dbReference type="GO" id="GO:0005524">
    <property type="term" value="F:ATP binding"/>
    <property type="evidence" value="ECO:0007669"/>
    <property type="project" value="UniProtKB-UniRule"/>
</dbReference>
<dbReference type="GO" id="GO:0008270">
    <property type="term" value="F:zinc ion binding"/>
    <property type="evidence" value="ECO:0007669"/>
    <property type="project" value="UniProtKB-UniRule"/>
</dbReference>
<dbReference type="GO" id="GO:0044209">
    <property type="term" value="P:AMP salvage"/>
    <property type="evidence" value="ECO:0007669"/>
    <property type="project" value="UniProtKB-UniRule"/>
</dbReference>
<dbReference type="CDD" id="cd01428">
    <property type="entry name" value="ADK"/>
    <property type="match status" value="1"/>
</dbReference>
<dbReference type="FunFam" id="3.40.50.300:FF:000106">
    <property type="entry name" value="Adenylate kinase mitochondrial"/>
    <property type="match status" value="1"/>
</dbReference>
<dbReference type="Gene3D" id="3.40.50.300">
    <property type="entry name" value="P-loop containing nucleotide triphosphate hydrolases"/>
    <property type="match status" value="1"/>
</dbReference>
<dbReference type="HAMAP" id="MF_00235">
    <property type="entry name" value="Adenylate_kinase_Adk"/>
    <property type="match status" value="1"/>
</dbReference>
<dbReference type="InterPro" id="IPR006259">
    <property type="entry name" value="Adenyl_kin_sub"/>
</dbReference>
<dbReference type="InterPro" id="IPR000850">
    <property type="entry name" value="Adenylat/UMP-CMP_kin"/>
</dbReference>
<dbReference type="InterPro" id="IPR033690">
    <property type="entry name" value="Adenylat_kinase_CS"/>
</dbReference>
<dbReference type="InterPro" id="IPR007862">
    <property type="entry name" value="Adenylate_kinase_lid-dom"/>
</dbReference>
<dbReference type="InterPro" id="IPR027417">
    <property type="entry name" value="P-loop_NTPase"/>
</dbReference>
<dbReference type="NCBIfam" id="TIGR01351">
    <property type="entry name" value="adk"/>
    <property type="match status" value="1"/>
</dbReference>
<dbReference type="NCBIfam" id="NF001380">
    <property type="entry name" value="PRK00279.1-2"/>
    <property type="match status" value="1"/>
</dbReference>
<dbReference type="NCBIfam" id="NF001381">
    <property type="entry name" value="PRK00279.1-3"/>
    <property type="match status" value="1"/>
</dbReference>
<dbReference type="PANTHER" id="PTHR23359">
    <property type="entry name" value="NUCLEOTIDE KINASE"/>
    <property type="match status" value="1"/>
</dbReference>
<dbReference type="Pfam" id="PF00406">
    <property type="entry name" value="ADK"/>
    <property type="match status" value="1"/>
</dbReference>
<dbReference type="Pfam" id="PF05191">
    <property type="entry name" value="ADK_lid"/>
    <property type="match status" value="1"/>
</dbReference>
<dbReference type="PRINTS" id="PR00094">
    <property type="entry name" value="ADENYLTKNASE"/>
</dbReference>
<dbReference type="SUPFAM" id="SSF52540">
    <property type="entry name" value="P-loop containing nucleoside triphosphate hydrolases"/>
    <property type="match status" value="1"/>
</dbReference>
<dbReference type="PROSITE" id="PS00113">
    <property type="entry name" value="ADENYLATE_KINASE"/>
    <property type="match status" value="1"/>
</dbReference>
<accession>B2GDU8</accession>
<proteinExistence type="inferred from homology"/>
<organism>
    <name type="scientific">Limosilactobacillus fermentum (strain NBRC 3956 / LMG 18251)</name>
    <name type="common">Lactobacillus fermentum</name>
    <dbReference type="NCBI Taxonomy" id="334390"/>
    <lineage>
        <taxon>Bacteria</taxon>
        <taxon>Bacillati</taxon>
        <taxon>Bacillota</taxon>
        <taxon>Bacilli</taxon>
        <taxon>Lactobacillales</taxon>
        <taxon>Lactobacillaceae</taxon>
        <taxon>Limosilactobacillus</taxon>
    </lineage>
</organism>
<sequence length="216" mass="24153">MNLVLMGLPGAGKGTQAQLIVKDFDIPHISTGDIFRAAIKNQTPMGVEAKKFIDKGELVPDEVTNGIVQERLAQDDTKDGFMLDGFPRNLAQADALNAMLVDSDRQLDAVINIHVRPEVLVERLSGRFICRNCGTTYHRLYNPTKVEGTCDVCGGHDFYQRDDDKPETVKNRLDVNIKLNTPLIDFYKKQGVLYTIDGEQDIDKVYQAVKEVLTNL</sequence>
<gene>
    <name evidence="1" type="primary">adk</name>
    <name type="ordered locus">LAF_1494</name>
</gene>
<comment type="function">
    <text evidence="1">Catalyzes the reversible transfer of the terminal phosphate group between ATP and AMP. Plays an important role in cellular energy homeostasis and in adenine nucleotide metabolism.</text>
</comment>
<comment type="catalytic activity">
    <reaction evidence="1">
        <text>AMP + ATP = 2 ADP</text>
        <dbReference type="Rhea" id="RHEA:12973"/>
        <dbReference type="ChEBI" id="CHEBI:30616"/>
        <dbReference type="ChEBI" id="CHEBI:456215"/>
        <dbReference type="ChEBI" id="CHEBI:456216"/>
        <dbReference type="EC" id="2.7.4.3"/>
    </reaction>
</comment>
<comment type="pathway">
    <text evidence="1">Purine metabolism; AMP biosynthesis via salvage pathway; AMP from ADP: step 1/1.</text>
</comment>
<comment type="subunit">
    <text evidence="1">Monomer.</text>
</comment>
<comment type="subcellular location">
    <subcellularLocation>
        <location evidence="1">Cytoplasm</location>
    </subcellularLocation>
</comment>
<comment type="domain">
    <text evidence="1">Consists of three domains, a large central CORE domain and two small peripheral domains, NMPbind and LID, which undergo movements during catalysis. The LID domain closes over the site of phosphoryl transfer upon ATP binding. Assembling and dissambling the active center during each catalytic cycle provides an effective means to prevent ATP hydrolysis. Some bacteria have evolved a zinc-coordinating structure that stabilizes the LID domain.</text>
</comment>
<comment type="similarity">
    <text evidence="1">Belongs to the adenylate kinase family.</text>
</comment>